<organism>
    <name type="scientific">Aspergillus fumigatus (strain ATCC MYA-4609 / CBS 101355 / FGSC A1100 / Af293)</name>
    <name type="common">Neosartorya fumigata</name>
    <dbReference type="NCBI Taxonomy" id="330879"/>
    <lineage>
        <taxon>Eukaryota</taxon>
        <taxon>Fungi</taxon>
        <taxon>Dikarya</taxon>
        <taxon>Ascomycota</taxon>
        <taxon>Pezizomycotina</taxon>
        <taxon>Eurotiomycetes</taxon>
        <taxon>Eurotiomycetidae</taxon>
        <taxon>Eurotiales</taxon>
        <taxon>Aspergillaceae</taxon>
        <taxon>Aspergillus</taxon>
        <taxon>Aspergillus subgen. Fumigati</taxon>
    </lineage>
</organism>
<protein>
    <recommendedName>
        <fullName evidence="6">ATP-dependent rRNA helicase spb4</fullName>
        <ecNumber evidence="1">3.6.4.13</ecNumber>
    </recommendedName>
</protein>
<feature type="chain" id="PRO_0000232321" description="ATP-dependent rRNA helicase spb4">
    <location>
        <begin position="1"/>
        <end position="640"/>
    </location>
</feature>
<feature type="domain" description="Helicase ATP-binding" evidence="3">
    <location>
        <begin position="45"/>
        <end position="249"/>
    </location>
</feature>
<feature type="domain" description="Helicase C-terminal" evidence="4">
    <location>
        <begin position="283"/>
        <end position="437"/>
    </location>
</feature>
<feature type="region of interest" description="Disordered" evidence="5">
    <location>
        <begin position="531"/>
        <end position="593"/>
    </location>
</feature>
<feature type="region of interest" description="Disordered" evidence="5">
    <location>
        <begin position="607"/>
        <end position="640"/>
    </location>
</feature>
<feature type="coiled-coil region" evidence="2">
    <location>
        <begin position="521"/>
        <end position="629"/>
    </location>
</feature>
<feature type="short sequence motif" description="Q motif" evidence="6">
    <location>
        <begin position="14"/>
        <end position="42"/>
    </location>
</feature>
<feature type="short sequence motif" description="DEAD box" evidence="6">
    <location>
        <begin position="197"/>
        <end position="200"/>
    </location>
</feature>
<feature type="compositionally biased region" description="Basic and acidic residues" evidence="5">
    <location>
        <begin position="577"/>
        <end position="593"/>
    </location>
</feature>
<feature type="compositionally biased region" description="Acidic residues" evidence="5">
    <location>
        <begin position="630"/>
        <end position="640"/>
    </location>
</feature>
<feature type="binding site" evidence="3">
    <location>
        <begin position="58"/>
        <end position="65"/>
    </location>
    <ligand>
        <name>ATP</name>
        <dbReference type="ChEBI" id="CHEBI:30616"/>
    </ligand>
</feature>
<accession>Q4WYJ7</accession>
<name>SPB4_ASPFU</name>
<sequence length="640" mass="70950">MAPKPPSGTSLRAWDAVTPALSEWVLEAMSSMGFTRMTPVQASAIPLFMAHKDVVVEAVTGSGKTLSFLIPVVEKLLRLEEPIKKHHVGAIIISPTRELASQIYNVLSSLLAFHPPSAAAINPSEDDDAPRPKFPSSTLKVVPQLLLGGSTTPAEDLSTFLKRSPNVLVSTPGRLLELLSSPHVHCPQSSFEMLVLDEADRLLDLGFKETLQNILRRLPKQRRTGLFSASVSEAVDQIVRVGLRNPVKVMVKVKGGSGVDDKRTPASLQMTYLTTPPSHKFAALKRIVSSVQPTPLKTIFFVSTCSGVDYLSAILPLLLGDDFLLIPLHGKHQANVRQKNFNRFINSHDPAILLTTDVAARGLDIPSVDLVVQIDPPSDPKSFIHRCGRAGRAGRRGLSVVLLHPGREEDYVSFLEVRKTPVVPFSPSISFSDADAAAATATARKAVLADRALHDRGQKAFVSWLRSYSKHQASSIFRVSDLDWEALGKAWGLLKLPKMPELKNFTGDKTLGMSLDWDNYAYKDKQREKRRKELLQEAAESGATQSTSNKRRATESVAWSQQAESKNKKLKRREQKKSKQEKARWEKMTEEEKQKVLETEKMVEELRKKNEEERRLRRAVAKAAGAKADGDDEEEFQGFD</sequence>
<reference key="1">
    <citation type="journal article" date="2005" name="Nature">
        <title>Genomic sequence of the pathogenic and allergenic filamentous fungus Aspergillus fumigatus.</title>
        <authorList>
            <person name="Nierman W.C."/>
            <person name="Pain A."/>
            <person name="Anderson M.J."/>
            <person name="Wortman J.R."/>
            <person name="Kim H.S."/>
            <person name="Arroyo J."/>
            <person name="Berriman M."/>
            <person name="Abe K."/>
            <person name="Archer D.B."/>
            <person name="Bermejo C."/>
            <person name="Bennett J.W."/>
            <person name="Bowyer P."/>
            <person name="Chen D."/>
            <person name="Collins M."/>
            <person name="Coulsen R."/>
            <person name="Davies R."/>
            <person name="Dyer P.S."/>
            <person name="Farman M.L."/>
            <person name="Fedorova N."/>
            <person name="Fedorova N.D."/>
            <person name="Feldblyum T.V."/>
            <person name="Fischer R."/>
            <person name="Fosker N."/>
            <person name="Fraser A."/>
            <person name="Garcia J.L."/>
            <person name="Garcia M.J."/>
            <person name="Goble A."/>
            <person name="Goldman G.H."/>
            <person name="Gomi K."/>
            <person name="Griffith-Jones S."/>
            <person name="Gwilliam R."/>
            <person name="Haas B.J."/>
            <person name="Haas H."/>
            <person name="Harris D.E."/>
            <person name="Horiuchi H."/>
            <person name="Huang J."/>
            <person name="Humphray S."/>
            <person name="Jimenez J."/>
            <person name="Keller N."/>
            <person name="Khouri H."/>
            <person name="Kitamoto K."/>
            <person name="Kobayashi T."/>
            <person name="Konzack S."/>
            <person name="Kulkarni R."/>
            <person name="Kumagai T."/>
            <person name="Lafton A."/>
            <person name="Latge J.-P."/>
            <person name="Li W."/>
            <person name="Lord A."/>
            <person name="Lu C."/>
            <person name="Majoros W.H."/>
            <person name="May G.S."/>
            <person name="Miller B.L."/>
            <person name="Mohamoud Y."/>
            <person name="Molina M."/>
            <person name="Monod M."/>
            <person name="Mouyna I."/>
            <person name="Mulligan S."/>
            <person name="Murphy L.D."/>
            <person name="O'Neil S."/>
            <person name="Paulsen I."/>
            <person name="Penalva M.A."/>
            <person name="Pertea M."/>
            <person name="Price C."/>
            <person name="Pritchard B.L."/>
            <person name="Quail M.A."/>
            <person name="Rabbinowitsch E."/>
            <person name="Rawlins N."/>
            <person name="Rajandream M.A."/>
            <person name="Reichard U."/>
            <person name="Renauld H."/>
            <person name="Robson G.D."/>
            <person name="Rodriguez de Cordoba S."/>
            <person name="Rodriguez-Pena J.M."/>
            <person name="Ronning C.M."/>
            <person name="Rutter S."/>
            <person name="Salzberg S.L."/>
            <person name="Sanchez M."/>
            <person name="Sanchez-Ferrero J.C."/>
            <person name="Saunders D."/>
            <person name="Seeger K."/>
            <person name="Squares R."/>
            <person name="Squares S."/>
            <person name="Takeuchi M."/>
            <person name="Tekaia F."/>
            <person name="Turner G."/>
            <person name="Vazquez de Aldana C.R."/>
            <person name="Weidman J."/>
            <person name="White O."/>
            <person name="Woodward J.R."/>
            <person name="Yu J.-H."/>
            <person name="Fraser C.M."/>
            <person name="Galagan J.E."/>
            <person name="Asai K."/>
            <person name="Machida M."/>
            <person name="Hall N."/>
            <person name="Barrell B.G."/>
            <person name="Denning D.W."/>
        </authorList>
    </citation>
    <scope>NUCLEOTIDE SEQUENCE [LARGE SCALE GENOMIC DNA]</scope>
    <source>
        <strain>ATCC MYA-4609 / CBS 101355 / FGSC A1100 / Af293</strain>
    </source>
</reference>
<comment type="function">
    <text evidence="1">ATP-binding RNA helicase involved in the biogenesis of 60S ribosomal subunits. Binds 90S pre-ribosomal particles and dissociates from pre-60S ribosomal particles after processing of 27SB pre-rRNA. Required for the normal formation of 18S rRNA through the processing of pre-rRNAs at sites A0, A1 and A2, and the normal formation of 25S and 5.8S rRNAs through the processing of pre-rRNAs at sites C1 and C2.</text>
</comment>
<comment type="catalytic activity">
    <reaction evidence="1">
        <text>ATP + H2O = ADP + phosphate + H(+)</text>
        <dbReference type="Rhea" id="RHEA:13065"/>
        <dbReference type="ChEBI" id="CHEBI:15377"/>
        <dbReference type="ChEBI" id="CHEBI:15378"/>
        <dbReference type="ChEBI" id="CHEBI:30616"/>
        <dbReference type="ChEBI" id="CHEBI:43474"/>
        <dbReference type="ChEBI" id="CHEBI:456216"/>
        <dbReference type="EC" id="3.6.4.13"/>
    </reaction>
</comment>
<comment type="subunit">
    <text evidence="1">Component of pre-60S ribosomal complexes.</text>
</comment>
<comment type="subcellular location">
    <subcellularLocation>
        <location evidence="1">Nucleus</location>
        <location evidence="1">Nucleolus</location>
    </subcellularLocation>
</comment>
<comment type="domain">
    <text>The Q motif is unique to and characteristic of the DEAD box family of RNA helicases and controls ATP binding and hydrolysis.</text>
</comment>
<comment type="similarity">
    <text evidence="6">Belongs to the DEAD box helicase family. DDX55/SPB4 subfamily.</text>
</comment>
<comment type="sequence caution" evidence="6">
    <conflict type="erroneous gene model prediction">
        <sequence resource="EMBL-CDS" id="EAL92256"/>
    </conflict>
</comment>
<proteinExistence type="inferred from homology"/>
<gene>
    <name evidence="1" type="primary">spb4</name>
    <name type="ORF">AFUA_3G13280</name>
</gene>
<evidence type="ECO:0000250" key="1">
    <source>
        <dbReference type="UniProtKB" id="P25808"/>
    </source>
</evidence>
<evidence type="ECO:0000255" key="2"/>
<evidence type="ECO:0000255" key="3">
    <source>
        <dbReference type="PROSITE-ProRule" id="PRU00541"/>
    </source>
</evidence>
<evidence type="ECO:0000255" key="4">
    <source>
        <dbReference type="PROSITE-ProRule" id="PRU00542"/>
    </source>
</evidence>
<evidence type="ECO:0000256" key="5">
    <source>
        <dbReference type="SAM" id="MobiDB-lite"/>
    </source>
</evidence>
<evidence type="ECO:0000305" key="6"/>
<dbReference type="EC" id="3.6.4.13" evidence="1"/>
<dbReference type="EMBL" id="AAHF01000002">
    <property type="protein sequence ID" value="EAL92256.1"/>
    <property type="status" value="ALT_SEQ"/>
    <property type="molecule type" value="Genomic_DNA"/>
</dbReference>
<dbReference type="RefSeq" id="XP_754294.1">
    <property type="nucleotide sequence ID" value="XM_749201.1"/>
</dbReference>
<dbReference type="SMR" id="Q4WYJ7"/>
<dbReference type="FunCoup" id="Q4WYJ7">
    <property type="interactions" value="1168"/>
</dbReference>
<dbReference type="STRING" id="330879.Q4WYJ7"/>
<dbReference type="GeneID" id="3511733"/>
<dbReference type="KEGG" id="afm:AFUA_3G13280"/>
<dbReference type="VEuPathDB" id="FungiDB:Afu3g13280"/>
<dbReference type="eggNOG" id="KOG0345">
    <property type="taxonomic scope" value="Eukaryota"/>
</dbReference>
<dbReference type="HOGENOM" id="CLU_003041_26_4_1"/>
<dbReference type="InParanoid" id="Q4WYJ7"/>
<dbReference type="OrthoDB" id="7396459at2759"/>
<dbReference type="Proteomes" id="UP000002530">
    <property type="component" value="Chromosome 3"/>
</dbReference>
<dbReference type="GO" id="GO:0005730">
    <property type="term" value="C:nucleolus"/>
    <property type="evidence" value="ECO:0000318"/>
    <property type="project" value="GO_Central"/>
</dbReference>
<dbReference type="GO" id="GO:0005524">
    <property type="term" value="F:ATP binding"/>
    <property type="evidence" value="ECO:0007669"/>
    <property type="project" value="UniProtKB-KW"/>
</dbReference>
<dbReference type="GO" id="GO:0016887">
    <property type="term" value="F:ATP hydrolysis activity"/>
    <property type="evidence" value="ECO:0007669"/>
    <property type="project" value="RHEA"/>
</dbReference>
<dbReference type="GO" id="GO:0003723">
    <property type="term" value="F:RNA binding"/>
    <property type="evidence" value="ECO:0007669"/>
    <property type="project" value="UniProtKB-KW"/>
</dbReference>
<dbReference type="GO" id="GO:0003724">
    <property type="term" value="F:RNA helicase activity"/>
    <property type="evidence" value="ECO:0007669"/>
    <property type="project" value="UniProtKB-EC"/>
</dbReference>
<dbReference type="GO" id="GO:0006364">
    <property type="term" value="P:rRNA processing"/>
    <property type="evidence" value="ECO:0007669"/>
    <property type="project" value="UniProtKB-KW"/>
</dbReference>
<dbReference type="CDD" id="cd17960">
    <property type="entry name" value="DEADc_DDX55"/>
    <property type="match status" value="1"/>
</dbReference>
<dbReference type="CDD" id="cd18787">
    <property type="entry name" value="SF2_C_DEAD"/>
    <property type="match status" value="1"/>
</dbReference>
<dbReference type="Gene3D" id="3.40.50.300">
    <property type="entry name" value="P-loop containing nucleotide triphosphate hydrolases"/>
    <property type="match status" value="2"/>
</dbReference>
<dbReference type="InterPro" id="IPR056330">
    <property type="entry name" value="CTT_SPB4"/>
</dbReference>
<dbReference type="InterPro" id="IPR011545">
    <property type="entry name" value="DEAD/DEAH_box_helicase_dom"/>
</dbReference>
<dbReference type="InterPro" id="IPR014001">
    <property type="entry name" value="Helicase_ATP-bd"/>
</dbReference>
<dbReference type="InterPro" id="IPR001650">
    <property type="entry name" value="Helicase_C-like"/>
</dbReference>
<dbReference type="InterPro" id="IPR027417">
    <property type="entry name" value="P-loop_NTPase"/>
</dbReference>
<dbReference type="InterPro" id="IPR000629">
    <property type="entry name" value="RNA-helicase_DEAD-box_CS"/>
</dbReference>
<dbReference type="InterPro" id="IPR014014">
    <property type="entry name" value="RNA_helicase_DEAD_Q_motif"/>
</dbReference>
<dbReference type="InterPro" id="IPR025313">
    <property type="entry name" value="SPB4-like_CTE"/>
</dbReference>
<dbReference type="PANTHER" id="PTHR24031">
    <property type="entry name" value="RNA HELICASE"/>
    <property type="match status" value="1"/>
</dbReference>
<dbReference type="Pfam" id="PF13959">
    <property type="entry name" value="CTE_SPB4"/>
    <property type="match status" value="1"/>
</dbReference>
<dbReference type="Pfam" id="PF23681">
    <property type="entry name" value="CTT_SPB4"/>
    <property type="match status" value="1"/>
</dbReference>
<dbReference type="Pfam" id="PF00270">
    <property type="entry name" value="DEAD"/>
    <property type="match status" value="1"/>
</dbReference>
<dbReference type="Pfam" id="PF00271">
    <property type="entry name" value="Helicase_C"/>
    <property type="match status" value="1"/>
</dbReference>
<dbReference type="SMART" id="SM00487">
    <property type="entry name" value="DEXDc"/>
    <property type="match status" value="1"/>
</dbReference>
<dbReference type="SMART" id="SM01178">
    <property type="entry name" value="DUF4217"/>
    <property type="match status" value="1"/>
</dbReference>
<dbReference type="SMART" id="SM00490">
    <property type="entry name" value="HELICc"/>
    <property type="match status" value="1"/>
</dbReference>
<dbReference type="SUPFAM" id="SSF52540">
    <property type="entry name" value="P-loop containing nucleoside triphosphate hydrolases"/>
    <property type="match status" value="2"/>
</dbReference>
<dbReference type="PROSITE" id="PS00039">
    <property type="entry name" value="DEAD_ATP_HELICASE"/>
    <property type="match status" value="1"/>
</dbReference>
<dbReference type="PROSITE" id="PS51192">
    <property type="entry name" value="HELICASE_ATP_BIND_1"/>
    <property type="match status" value="1"/>
</dbReference>
<dbReference type="PROSITE" id="PS51194">
    <property type="entry name" value="HELICASE_CTER"/>
    <property type="match status" value="1"/>
</dbReference>
<dbReference type="PROSITE" id="PS51195">
    <property type="entry name" value="Q_MOTIF"/>
    <property type="match status" value="1"/>
</dbReference>
<keyword id="KW-0067">ATP-binding</keyword>
<keyword id="KW-0175">Coiled coil</keyword>
<keyword id="KW-0347">Helicase</keyword>
<keyword id="KW-0378">Hydrolase</keyword>
<keyword id="KW-0547">Nucleotide-binding</keyword>
<keyword id="KW-0539">Nucleus</keyword>
<keyword id="KW-1185">Reference proteome</keyword>
<keyword id="KW-0690">Ribosome biogenesis</keyword>
<keyword id="KW-0694">RNA-binding</keyword>
<keyword id="KW-0698">rRNA processing</keyword>